<reference key="1">
    <citation type="journal article" date="1993" name="Biochim. Biophys. Acta">
        <title>Cloning and sequence analysis of a murine cDNA encoding glutamate decarboxylase (GAD65).</title>
        <authorList>
            <person name="Lee D.S."/>
            <person name="Tian J."/>
            <person name="Phan T."/>
            <person name="Kaufman D.L."/>
        </authorList>
    </citation>
    <scope>NUCLEOTIDE SEQUENCE [MRNA]</scope>
    <source>
        <strain>C57BL/6J</strain>
        <tissue>Brain</tissue>
    </source>
</reference>
<reference key="2">
    <citation type="journal article" date="1996" name="Biochem. Biophys. Res. Commun.">
        <title>Mice lacking the 65 kDa isoform of glutamic acid decarboxylase (GAD65) maintain normal levels of GAD67 and GABA in their brains but are susceptible to seizures.</title>
        <authorList>
            <person name="Asada H."/>
            <person name="Kawamura Y."/>
            <person name="Maruyama K."/>
            <person name="Kume H."/>
            <person name="Ding R.G."/>
            <person name="Ji F.Y."/>
            <person name="Kanbara N."/>
            <person name="Kuzume H."/>
            <person name="Sanbo M."/>
            <person name="Yagi T."/>
            <person name="Obata K."/>
        </authorList>
    </citation>
    <scope>NUCLEOTIDE SEQUENCE [MRNA]</scope>
    <source>
        <strain>C57BL/6J</strain>
        <tissue>Brain</tissue>
    </source>
</reference>
<reference key="3">
    <citation type="journal article" date="2004" name="Genome Res.">
        <title>The status, quality, and expansion of the NIH full-length cDNA project: the Mammalian Gene Collection (MGC).</title>
        <authorList>
            <consortium name="The MGC Project Team"/>
        </authorList>
    </citation>
    <scope>NUCLEOTIDE SEQUENCE [LARGE SCALE MRNA]</scope>
    <source>
        <tissue>Eye</tissue>
    </source>
</reference>
<reference key="4">
    <citation type="journal article" date="1993" name="Endocrinology">
        <title>Localization and quantitation of expression of two glutamate decarboxylase genes in pancreatic beta-cells and other peripheral tissues of mouse and rat.</title>
        <authorList>
            <person name="Faulkner-Jones B.E."/>
            <person name="Cram D.S."/>
            <person name="Kun J."/>
            <person name="Harrison L.C."/>
        </authorList>
    </citation>
    <scope>NUCLEOTIDE SEQUENCE [MRNA] OF 175-379</scope>
    <source>
        <tissue>Brain</tissue>
    </source>
</reference>
<reference key="5">
    <citation type="journal article" date="2010" name="Cell">
        <title>A tissue-specific atlas of mouse protein phosphorylation and expression.</title>
        <authorList>
            <person name="Huttlin E.L."/>
            <person name="Jedrychowski M.P."/>
            <person name="Elias J.E."/>
            <person name="Goswami T."/>
            <person name="Rad R."/>
            <person name="Beausoleil S.A."/>
            <person name="Villen J."/>
            <person name="Haas W."/>
            <person name="Sowa M.E."/>
            <person name="Gygi S.P."/>
        </authorList>
    </citation>
    <scope>IDENTIFICATION BY MASS SPECTROMETRY [LARGE SCALE ANALYSIS]</scope>
    <source>
        <tissue>Brain</tissue>
    </source>
</reference>
<keyword id="KW-1003">Cell membrane</keyword>
<keyword id="KW-0966">Cell projection</keyword>
<keyword id="KW-0963">Cytoplasm</keyword>
<keyword id="KW-0968">Cytoplasmic vesicle</keyword>
<keyword id="KW-0210">Decarboxylase</keyword>
<keyword id="KW-0333">Golgi apparatus</keyword>
<keyword id="KW-0449">Lipoprotein</keyword>
<keyword id="KW-0456">Lyase</keyword>
<keyword id="KW-0472">Membrane</keyword>
<keyword id="KW-0530">Neurotransmitter biosynthesis</keyword>
<keyword id="KW-0564">Palmitate</keyword>
<keyword id="KW-0597">Phosphoprotein</keyword>
<keyword id="KW-0663">Pyridoxal phosphate</keyword>
<keyword id="KW-1185">Reference proteome</keyword>
<keyword id="KW-0770">Synapse</keyword>
<comment type="function">
    <text>Catalyzes the production of GABA.</text>
</comment>
<comment type="catalytic activity">
    <reaction>
        <text>L-glutamate + H(+) = 4-aminobutanoate + CO2</text>
        <dbReference type="Rhea" id="RHEA:17785"/>
        <dbReference type="ChEBI" id="CHEBI:15378"/>
        <dbReference type="ChEBI" id="CHEBI:16526"/>
        <dbReference type="ChEBI" id="CHEBI:29985"/>
        <dbReference type="ChEBI" id="CHEBI:59888"/>
        <dbReference type="EC" id="4.1.1.15"/>
    </reaction>
</comment>
<comment type="cofactor">
    <cofactor>
        <name>pyridoxal 5'-phosphate</name>
        <dbReference type="ChEBI" id="CHEBI:597326"/>
    </cofactor>
</comment>
<comment type="subunit">
    <text evidence="1">Homodimer.</text>
</comment>
<comment type="subcellular location">
    <subcellularLocation>
        <location evidence="1">Cytoplasm</location>
        <location evidence="1">Cytosol</location>
    </subcellularLocation>
    <subcellularLocation>
        <location evidence="1">Cytoplasmic vesicle</location>
    </subcellularLocation>
    <subcellularLocation>
        <location evidence="1">Presynaptic cell membrane</location>
        <topology evidence="1">Lipid-anchor</topology>
    </subcellularLocation>
    <subcellularLocation>
        <location evidence="1">Golgi apparatus membrane</location>
        <topology evidence="1">Peripheral membrane protein</topology>
        <orientation evidence="1">Cytoplasmic side</orientation>
    </subcellularLocation>
    <text evidence="1">Associated to cytoplasmic vesicles. In neurons, cytosolic leaflet of Golgi membranes and presynaptic clusters (By similarity).</text>
</comment>
<comment type="PTM">
    <text evidence="1">Phosphorylated; which does not affect kinetic parameters or subcellular location.</text>
</comment>
<comment type="PTM">
    <text evidence="1">Palmitoylated; which is required for presynaptic clustering.</text>
</comment>
<comment type="similarity">
    <text evidence="4">Belongs to the group II decarboxylase family.</text>
</comment>
<dbReference type="EC" id="4.1.1.15"/>
<dbReference type="EMBL" id="L16980">
    <property type="protein sequence ID" value="AAA93049.1"/>
    <property type="molecule type" value="mRNA"/>
</dbReference>
<dbReference type="EMBL" id="D42051">
    <property type="protein sequence ID" value="BAA22893.1"/>
    <property type="molecule type" value="mRNA"/>
</dbReference>
<dbReference type="EMBL" id="BC018380">
    <property type="protein sequence ID" value="AAH18380.1"/>
    <property type="molecule type" value="mRNA"/>
</dbReference>
<dbReference type="EMBL" id="S67454">
    <property type="status" value="NOT_ANNOTATED_CDS"/>
    <property type="molecule type" value="mRNA"/>
</dbReference>
<dbReference type="CCDS" id="CCDS15724.1"/>
<dbReference type="PIR" id="S38533">
    <property type="entry name" value="S38533"/>
</dbReference>
<dbReference type="RefSeq" id="NP_032104.2">
    <property type="nucleotide sequence ID" value="NM_008078.2"/>
</dbReference>
<dbReference type="SMR" id="P48320"/>
<dbReference type="BioGRID" id="199815">
    <property type="interactions" value="9"/>
</dbReference>
<dbReference type="ComplexPortal" id="CPX-3062">
    <property type="entry name" value="Glutamate decarboxylase 2 complex"/>
</dbReference>
<dbReference type="ComplexPortal" id="CPX-3064">
    <property type="entry name" value="Glutamate decarboxylase 1/2 complex"/>
</dbReference>
<dbReference type="FunCoup" id="P48320">
    <property type="interactions" value="536"/>
</dbReference>
<dbReference type="IntAct" id="P48320">
    <property type="interactions" value="1"/>
</dbReference>
<dbReference type="STRING" id="10090.ENSMUSP00000028123"/>
<dbReference type="GlyGen" id="P48320">
    <property type="glycosylation" value="1 site, 1 O-linked glycan (1 site)"/>
</dbReference>
<dbReference type="iPTMnet" id="P48320"/>
<dbReference type="PhosphoSitePlus" id="P48320"/>
<dbReference type="SwissPalm" id="P48320"/>
<dbReference type="PaxDb" id="10090-ENSMUSP00000028123"/>
<dbReference type="PeptideAtlas" id="P48320"/>
<dbReference type="ProteomicsDB" id="279885"/>
<dbReference type="ABCD" id="P48320">
    <property type="antibodies" value="1 sequenced antibody"/>
</dbReference>
<dbReference type="Antibodypedia" id="3635">
    <property type="antibodies" value="768 antibodies from 43 providers"/>
</dbReference>
<dbReference type="DNASU" id="14417"/>
<dbReference type="Ensembl" id="ENSMUST00000028123.4">
    <property type="protein sequence ID" value="ENSMUSP00000028123.4"/>
    <property type="gene ID" value="ENSMUSG00000026787.4"/>
</dbReference>
<dbReference type="GeneID" id="14417"/>
<dbReference type="KEGG" id="mmu:14417"/>
<dbReference type="UCSC" id="uc008inj.1">
    <property type="organism name" value="mouse"/>
</dbReference>
<dbReference type="AGR" id="MGI:95634"/>
<dbReference type="CTD" id="2572"/>
<dbReference type="MGI" id="MGI:95634">
    <property type="gene designation" value="Gad2"/>
</dbReference>
<dbReference type="VEuPathDB" id="HostDB:ENSMUSG00000026787"/>
<dbReference type="eggNOG" id="KOG0629">
    <property type="taxonomic scope" value="Eukaryota"/>
</dbReference>
<dbReference type="GeneTree" id="ENSGT00940000157951"/>
<dbReference type="HOGENOM" id="CLU_011856_0_0_1"/>
<dbReference type="InParanoid" id="P48320"/>
<dbReference type="OMA" id="AGMVIFK"/>
<dbReference type="OrthoDB" id="392571at2759"/>
<dbReference type="PhylomeDB" id="P48320"/>
<dbReference type="TreeFam" id="TF314688"/>
<dbReference type="BRENDA" id="4.1.1.15">
    <property type="organism ID" value="3474"/>
</dbReference>
<dbReference type="Reactome" id="R-MMU-888568">
    <property type="pathway name" value="GABA synthesis"/>
</dbReference>
<dbReference type="Reactome" id="R-MMU-888590">
    <property type="pathway name" value="GABA synthesis, release, reuptake and degradation"/>
</dbReference>
<dbReference type="BioGRID-ORCS" id="14417">
    <property type="hits" value="1 hit in 76 CRISPR screens"/>
</dbReference>
<dbReference type="ChiTaRS" id="Gad2">
    <property type="organism name" value="mouse"/>
</dbReference>
<dbReference type="PRO" id="PR:P48320"/>
<dbReference type="Proteomes" id="UP000000589">
    <property type="component" value="Chromosome 2"/>
</dbReference>
<dbReference type="RNAct" id="P48320">
    <property type="molecule type" value="protein"/>
</dbReference>
<dbReference type="Bgee" id="ENSMUSG00000026787">
    <property type="expression patterns" value="Expressed in olfactory tubercle and 128 other cell types or tissues"/>
</dbReference>
<dbReference type="ExpressionAtlas" id="P48320">
    <property type="expression patterns" value="baseline and differential"/>
</dbReference>
<dbReference type="GO" id="GO:0030424">
    <property type="term" value="C:axon"/>
    <property type="evidence" value="ECO:0000314"/>
    <property type="project" value="MGI"/>
</dbReference>
<dbReference type="GO" id="GO:0061202">
    <property type="term" value="C:clathrin-sculpted gamma-aminobutyric acid transport vesicle membrane"/>
    <property type="evidence" value="ECO:0000304"/>
    <property type="project" value="Reactome"/>
</dbReference>
<dbReference type="GO" id="GO:0005737">
    <property type="term" value="C:cytoplasm"/>
    <property type="evidence" value="ECO:0000314"/>
    <property type="project" value="MGI"/>
</dbReference>
<dbReference type="GO" id="GO:0005829">
    <property type="term" value="C:cytosol"/>
    <property type="evidence" value="ECO:0007669"/>
    <property type="project" value="UniProtKB-SubCell"/>
</dbReference>
<dbReference type="GO" id="GO:0000139">
    <property type="term" value="C:Golgi membrane"/>
    <property type="evidence" value="ECO:0007669"/>
    <property type="project" value="UniProtKB-SubCell"/>
</dbReference>
<dbReference type="GO" id="GO:0060077">
    <property type="term" value="C:inhibitory synapse"/>
    <property type="evidence" value="ECO:0000266"/>
    <property type="project" value="MGI"/>
</dbReference>
<dbReference type="GO" id="GO:0042734">
    <property type="term" value="C:presynaptic membrane"/>
    <property type="evidence" value="ECO:0007669"/>
    <property type="project" value="UniProtKB-SubCell"/>
</dbReference>
<dbReference type="GO" id="GO:0045202">
    <property type="term" value="C:synapse"/>
    <property type="evidence" value="ECO:0000314"/>
    <property type="project" value="MGI"/>
</dbReference>
<dbReference type="GO" id="GO:0004351">
    <property type="term" value="F:glutamate decarboxylase activity"/>
    <property type="evidence" value="ECO:0007669"/>
    <property type="project" value="UniProtKB-EC"/>
</dbReference>
<dbReference type="GO" id="GO:0030170">
    <property type="term" value="F:pyridoxal phosphate binding"/>
    <property type="evidence" value="ECO:0007669"/>
    <property type="project" value="InterPro"/>
</dbReference>
<dbReference type="GO" id="GO:0019752">
    <property type="term" value="P:carboxylic acid metabolic process"/>
    <property type="evidence" value="ECO:0007669"/>
    <property type="project" value="InterPro"/>
</dbReference>
<dbReference type="CDD" id="cd06450">
    <property type="entry name" value="DOPA_deC_like"/>
    <property type="match status" value="1"/>
</dbReference>
<dbReference type="FunFam" id="3.40.640.10:FF:000016">
    <property type="entry name" value="Glutamate decarboxylase like 1"/>
    <property type="match status" value="1"/>
</dbReference>
<dbReference type="Gene3D" id="3.90.1150.170">
    <property type="match status" value="1"/>
</dbReference>
<dbReference type="Gene3D" id="3.40.640.10">
    <property type="entry name" value="Type I PLP-dependent aspartate aminotransferase-like (Major domain)"/>
    <property type="match status" value="1"/>
</dbReference>
<dbReference type="InterPro" id="IPR002129">
    <property type="entry name" value="PyrdxlP-dep_de-COase"/>
</dbReference>
<dbReference type="InterPro" id="IPR015424">
    <property type="entry name" value="PyrdxlP-dep_Trfase"/>
</dbReference>
<dbReference type="InterPro" id="IPR015421">
    <property type="entry name" value="PyrdxlP-dep_Trfase_major"/>
</dbReference>
<dbReference type="InterPro" id="IPR021115">
    <property type="entry name" value="Pyridoxal-P_BS"/>
</dbReference>
<dbReference type="PANTHER" id="PTHR45677:SF11">
    <property type="entry name" value="GLUTAMATE DECARBOXYLASE 2"/>
    <property type="match status" value="1"/>
</dbReference>
<dbReference type="PANTHER" id="PTHR45677">
    <property type="entry name" value="GLUTAMATE DECARBOXYLASE-RELATED"/>
    <property type="match status" value="1"/>
</dbReference>
<dbReference type="Pfam" id="PF00282">
    <property type="entry name" value="Pyridoxal_deC"/>
    <property type="match status" value="1"/>
</dbReference>
<dbReference type="SUPFAM" id="SSF53383">
    <property type="entry name" value="PLP-dependent transferases"/>
    <property type="match status" value="1"/>
</dbReference>
<dbReference type="PROSITE" id="PS00392">
    <property type="entry name" value="DDC_GAD_HDC_YDC"/>
    <property type="match status" value="1"/>
</dbReference>
<evidence type="ECO:0000250" key="1"/>
<evidence type="ECO:0000250" key="2">
    <source>
        <dbReference type="UniProtKB" id="Q05329"/>
    </source>
</evidence>
<evidence type="ECO:0000256" key="3">
    <source>
        <dbReference type="SAM" id="MobiDB-lite"/>
    </source>
</evidence>
<evidence type="ECO:0000305" key="4"/>
<gene>
    <name type="primary">Gad2</name>
    <name type="synonym">Gad65</name>
</gene>
<feature type="chain" id="PRO_0000146969" description="Glutamate decarboxylase 2">
    <location>
        <begin position="1"/>
        <end position="585"/>
    </location>
</feature>
<feature type="region of interest" description="Disordered" evidence="3">
    <location>
        <begin position="1"/>
        <end position="24"/>
    </location>
</feature>
<feature type="binding site" evidence="1">
    <location>
        <begin position="181"/>
        <end position="183"/>
    </location>
    <ligand>
        <name>substrate</name>
    </ligand>
</feature>
<feature type="binding site" evidence="1">
    <location>
        <position position="558"/>
    </location>
    <ligand>
        <name>substrate</name>
    </ligand>
</feature>
<feature type="modified residue" description="Phosphoserine" evidence="2">
    <location>
        <position position="3"/>
    </location>
</feature>
<feature type="modified residue" description="Phosphoserine" evidence="2">
    <location>
        <position position="6"/>
    </location>
</feature>
<feature type="modified residue" description="Phosphoserine" evidence="2">
    <location>
        <position position="10"/>
    </location>
</feature>
<feature type="modified residue" description="Phosphoserine" evidence="2">
    <location>
        <position position="13"/>
    </location>
</feature>
<feature type="modified residue" description="N6-(pyridoxal phosphate)lysine" evidence="1">
    <location>
        <position position="396"/>
    </location>
</feature>
<feature type="lipid moiety-binding region" description="S-palmitoyl cysteine" evidence="1">
    <location>
        <position position="30"/>
    </location>
</feature>
<feature type="lipid moiety-binding region" description="S-palmitoyl cysteine" evidence="1">
    <location>
        <position position="45"/>
    </location>
</feature>
<feature type="sequence conflict" description="In Ref. 2; BAA22893." evidence="4" ref="2">
    <original>F</original>
    <variation>S</variation>
    <location>
        <position position="259"/>
    </location>
</feature>
<feature type="sequence conflict" description="In Ref. 4; S67454." evidence="4" ref="4">
    <original>I</original>
    <variation>S</variation>
    <location>
        <position position="319"/>
    </location>
</feature>
<feature type="sequence conflict" description="In Ref. 2; BAA22893." evidence="4" ref="2">
    <original>K</original>
    <variation>E</variation>
    <location>
        <position position="325"/>
    </location>
</feature>
<feature type="sequence conflict" description="In Ref. 2; BAA22893." evidence="4" ref="2">
    <original>P</original>
    <variation>S</variation>
    <location>
        <position position="499"/>
    </location>
</feature>
<accession>P48320</accession>
<accession>O35519</accession>
<sequence length="585" mass="65224">MASPGSGFWSFGSEDGSADPENPGTARAWCQVAQKFTGGIGNKLCALLYGDSGKPAEGGGSVTSRAATGKVACTCDQKPCNCPKGDVNYAFLHATDLLPACDGERPTLAFLQDVMNILLQYVVKSFDRSTKVIDFHYPNELLQEYNWELADQPQNLEEILTHCQTTLKYAIKTGHPRYFNQLSTGLDMVGLAADWLTSTANTNMFTYEIAPVFVLLEYVTLKKMREIIGWPGGSGDGIFSPGGAISNMYAMLIARYKMFPEVKEKGMAAVPRLIAFTSEHSHFSLKKGAAALGIGTDSVILIKCDERGKMIPSDLERRILEVKQKGFVPFLVSATAGTTVYGAFDPLLAVADICKKYKIWMHVDAAWGGGLLMSRKHKWKLSGVERANSVTWNPHKMMGVPLQCSALLVREEGLMQSCNQMHASYLFQQDKHYDLSYDTGDKALQCGRHVDVFKLWLMWRAKGTTGFEAHIDKCLELAEYLYTIIKNREGYEMVFDGKPQHTNVCFWFVPPSLRTLEDNEERMSRLSKVAPVIKARMMEYGTTMVSYQPLGDKVNFFRMVISNPAATHQDIDFLIEEIERLGQDL</sequence>
<name>DCE2_MOUSE</name>
<proteinExistence type="evidence at protein level"/>
<organism>
    <name type="scientific">Mus musculus</name>
    <name type="common">Mouse</name>
    <dbReference type="NCBI Taxonomy" id="10090"/>
    <lineage>
        <taxon>Eukaryota</taxon>
        <taxon>Metazoa</taxon>
        <taxon>Chordata</taxon>
        <taxon>Craniata</taxon>
        <taxon>Vertebrata</taxon>
        <taxon>Euteleostomi</taxon>
        <taxon>Mammalia</taxon>
        <taxon>Eutheria</taxon>
        <taxon>Euarchontoglires</taxon>
        <taxon>Glires</taxon>
        <taxon>Rodentia</taxon>
        <taxon>Myomorpha</taxon>
        <taxon>Muroidea</taxon>
        <taxon>Muridae</taxon>
        <taxon>Murinae</taxon>
        <taxon>Mus</taxon>
        <taxon>Mus</taxon>
    </lineage>
</organism>
<protein>
    <recommendedName>
        <fullName>Glutamate decarboxylase 2</fullName>
        <ecNumber>4.1.1.15</ecNumber>
    </recommendedName>
    <alternativeName>
        <fullName>65 kDa glutamic acid decarboxylase</fullName>
        <shortName>GAD-65</shortName>
    </alternativeName>
    <alternativeName>
        <fullName>Glutamate decarboxylase 65 kDa isoform</fullName>
    </alternativeName>
</protein>